<dbReference type="EMBL" id="CP001390">
    <property type="protein sequence ID" value="ACM19665.1"/>
    <property type="molecule type" value="Genomic_DNA"/>
</dbReference>
<dbReference type="RefSeq" id="WP_012646394.1">
    <property type="nucleotide sequence ID" value="NC_011979.1"/>
</dbReference>
<dbReference type="SMR" id="B9M422"/>
<dbReference type="STRING" id="316067.Geob_1305"/>
<dbReference type="KEGG" id="geo:Geob_1305"/>
<dbReference type="eggNOG" id="COG0322">
    <property type="taxonomic scope" value="Bacteria"/>
</dbReference>
<dbReference type="HOGENOM" id="CLU_014841_3_2_7"/>
<dbReference type="OrthoDB" id="9804933at2"/>
<dbReference type="Proteomes" id="UP000007721">
    <property type="component" value="Chromosome"/>
</dbReference>
<dbReference type="GO" id="GO:0005737">
    <property type="term" value="C:cytoplasm"/>
    <property type="evidence" value="ECO:0007669"/>
    <property type="project" value="UniProtKB-SubCell"/>
</dbReference>
<dbReference type="GO" id="GO:0009380">
    <property type="term" value="C:excinuclease repair complex"/>
    <property type="evidence" value="ECO:0007669"/>
    <property type="project" value="InterPro"/>
</dbReference>
<dbReference type="GO" id="GO:0003677">
    <property type="term" value="F:DNA binding"/>
    <property type="evidence" value="ECO:0007669"/>
    <property type="project" value="UniProtKB-UniRule"/>
</dbReference>
<dbReference type="GO" id="GO:0009381">
    <property type="term" value="F:excinuclease ABC activity"/>
    <property type="evidence" value="ECO:0007669"/>
    <property type="project" value="UniProtKB-UniRule"/>
</dbReference>
<dbReference type="GO" id="GO:0006289">
    <property type="term" value="P:nucleotide-excision repair"/>
    <property type="evidence" value="ECO:0007669"/>
    <property type="project" value="UniProtKB-UniRule"/>
</dbReference>
<dbReference type="GO" id="GO:0009432">
    <property type="term" value="P:SOS response"/>
    <property type="evidence" value="ECO:0007669"/>
    <property type="project" value="UniProtKB-UniRule"/>
</dbReference>
<dbReference type="CDD" id="cd10434">
    <property type="entry name" value="GIY-YIG_UvrC_Cho"/>
    <property type="match status" value="1"/>
</dbReference>
<dbReference type="FunFam" id="3.40.1440.10:FF:000001">
    <property type="entry name" value="UvrABC system protein C"/>
    <property type="match status" value="1"/>
</dbReference>
<dbReference type="Gene3D" id="1.10.150.20">
    <property type="entry name" value="5' to 3' exonuclease, C-terminal subdomain"/>
    <property type="match status" value="1"/>
</dbReference>
<dbReference type="Gene3D" id="3.40.1440.10">
    <property type="entry name" value="GIY-YIG endonuclease"/>
    <property type="match status" value="1"/>
</dbReference>
<dbReference type="Gene3D" id="3.30.420.340">
    <property type="entry name" value="UvrC, RNAse H endonuclease domain"/>
    <property type="match status" value="1"/>
</dbReference>
<dbReference type="HAMAP" id="MF_00203">
    <property type="entry name" value="UvrC"/>
    <property type="match status" value="1"/>
</dbReference>
<dbReference type="InterPro" id="IPR041663">
    <property type="entry name" value="DisA/LigA_HHH"/>
</dbReference>
<dbReference type="InterPro" id="IPR000305">
    <property type="entry name" value="GIY-YIG_endonuc"/>
</dbReference>
<dbReference type="InterPro" id="IPR035901">
    <property type="entry name" value="GIY-YIG_endonuc_sf"/>
</dbReference>
<dbReference type="InterPro" id="IPR047296">
    <property type="entry name" value="GIY-YIG_UvrC_Cho"/>
</dbReference>
<dbReference type="InterPro" id="IPR003583">
    <property type="entry name" value="Hlx-hairpin-Hlx_DNA-bd_motif"/>
</dbReference>
<dbReference type="InterPro" id="IPR010994">
    <property type="entry name" value="RuvA_2-like"/>
</dbReference>
<dbReference type="InterPro" id="IPR001943">
    <property type="entry name" value="UVR_dom"/>
</dbReference>
<dbReference type="InterPro" id="IPR036876">
    <property type="entry name" value="UVR_dom_sf"/>
</dbReference>
<dbReference type="InterPro" id="IPR050066">
    <property type="entry name" value="UvrABC_protein_C"/>
</dbReference>
<dbReference type="InterPro" id="IPR004791">
    <property type="entry name" value="UvrC"/>
</dbReference>
<dbReference type="InterPro" id="IPR001162">
    <property type="entry name" value="UvrC_RNase_H_dom"/>
</dbReference>
<dbReference type="InterPro" id="IPR038476">
    <property type="entry name" value="UvrC_RNase_H_dom_sf"/>
</dbReference>
<dbReference type="NCBIfam" id="NF001824">
    <property type="entry name" value="PRK00558.1-5"/>
    <property type="match status" value="1"/>
</dbReference>
<dbReference type="NCBIfam" id="TIGR00194">
    <property type="entry name" value="uvrC"/>
    <property type="match status" value="1"/>
</dbReference>
<dbReference type="PANTHER" id="PTHR30562:SF1">
    <property type="entry name" value="UVRABC SYSTEM PROTEIN C"/>
    <property type="match status" value="1"/>
</dbReference>
<dbReference type="PANTHER" id="PTHR30562">
    <property type="entry name" value="UVRC/OXIDOREDUCTASE"/>
    <property type="match status" value="1"/>
</dbReference>
<dbReference type="Pfam" id="PF01541">
    <property type="entry name" value="GIY-YIG"/>
    <property type="match status" value="1"/>
</dbReference>
<dbReference type="Pfam" id="PF12826">
    <property type="entry name" value="HHH_2"/>
    <property type="match status" value="1"/>
</dbReference>
<dbReference type="Pfam" id="PF02151">
    <property type="entry name" value="UVR"/>
    <property type="match status" value="1"/>
</dbReference>
<dbReference type="Pfam" id="PF22920">
    <property type="entry name" value="UvrC_RNaseH"/>
    <property type="match status" value="1"/>
</dbReference>
<dbReference type="Pfam" id="PF08459">
    <property type="entry name" value="UvrC_RNaseH_dom"/>
    <property type="match status" value="1"/>
</dbReference>
<dbReference type="SMART" id="SM00465">
    <property type="entry name" value="GIYc"/>
    <property type="match status" value="1"/>
</dbReference>
<dbReference type="SMART" id="SM00278">
    <property type="entry name" value="HhH1"/>
    <property type="match status" value="2"/>
</dbReference>
<dbReference type="SUPFAM" id="SSF46600">
    <property type="entry name" value="C-terminal UvrC-binding domain of UvrB"/>
    <property type="match status" value="1"/>
</dbReference>
<dbReference type="SUPFAM" id="SSF82771">
    <property type="entry name" value="GIY-YIG endonuclease"/>
    <property type="match status" value="1"/>
</dbReference>
<dbReference type="SUPFAM" id="SSF47781">
    <property type="entry name" value="RuvA domain 2-like"/>
    <property type="match status" value="1"/>
</dbReference>
<dbReference type="PROSITE" id="PS50164">
    <property type="entry name" value="GIY_YIG"/>
    <property type="match status" value="1"/>
</dbReference>
<dbReference type="PROSITE" id="PS50151">
    <property type="entry name" value="UVR"/>
    <property type="match status" value="1"/>
</dbReference>
<dbReference type="PROSITE" id="PS50165">
    <property type="entry name" value="UVRC"/>
    <property type="match status" value="1"/>
</dbReference>
<evidence type="ECO:0000255" key="1">
    <source>
        <dbReference type="HAMAP-Rule" id="MF_00203"/>
    </source>
</evidence>
<name>UVRC_GEODF</name>
<organism>
    <name type="scientific">Geotalea daltonii (strain DSM 22248 / JCM 15807 / FRC-32)</name>
    <name type="common">Geobacter daltonii</name>
    <dbReference type="NCBI Taxonomy" id="316067"/>
    <lineage>
        <taxon>Bacteria</taxon>
        <taxon>Pseudomonadati</taxon>
        <taxon>Thermodesulfobacteriota</taxon>
        <taxon>Desulfuromonadia</taxon>
        <taxon>Geobacterales</taxon>
        <taxon>Geobacteraceae</taxon>
        <taxon>Geotalea</taxon>
    </lineage>
</organism>
<proteinExistence type="inferred from homology"/>
<accession>B9M422</accession>
<keyword id="KW-0963">Cytoplasm</keyword>
<keyword id="KW-0227">DNA damage</keyword>
<keyword id="KW-0228">DNA excision</keyword>
<keyword id="KW-0234">DNA repair</keyword>
<keyword id="KW-0267">Excision nuclease</keyword>
<keyword id="KW-1185">Reference proteome</keyword>
<keyword id="KW-0742">SOS response</keyword>
<reference key="1">
    <citation type="submission" date="2009-01" db="EMBL/GenBank/DDBJ databases">
        <title>Complete sequence of Geobacter sp. FRC-32.</title>
        <authorList>
            <consortium name="US DOE Joint Genome Institute"/>
            <person name="Lucas S."/>
            <person name="Copeland A."/>
            <person name="Lapidus A."/>
            <person name="Glavina del Rio T."/>
            <person name="Dalin E."/>
            <person name="Tice H."/>
            <person name="Bruce D."/>
            <person name="Goodwin L."/>
            <person name="Pitluck S."/>
            <person name="Saunders E."/>
            <person name="Brettin T."/>
            <person name="Detter J.C."/>
            <person name="Han C."/>
            <person name="Larimer F."/>
            <person name="Land M."/>
            <person name="Hauser L."/>
            <person name="Kyrpides N."/>
            <person name="Ovchinnikova G."/>
            <person name="Kostka J."/>
            <person name="Richardson P."/>
        </authorList>
    </citation>
    <scope>NUCLEOTIDE SEQUENCE [LARGE SCALE GENOMIC DNA]</scope>
    <source>
        <strain>DSM 22248 / JCM 15807 / FRC-32</strain>
    </source>
</reference>
<sequence>MIEIDSIGHFPSSPGVYIMKDAEATVLYVGKARDLRKRIRSYFAASGDSRYQIRFLMARVTDIQFIVTDTEKEALILENTLIKKYRPKYNFNLRDDKTYFSLRMDMSSDFPRLSIIRKVTRDGARYFGPYSSASDARAVLKHLYKLFPLRHYPMETCRRRNRPCLFYQLKQCSAPCHGKISREDYMALAEGAALFLEGKNREILKIFRERMSAAAAAEKYEKAARFRDLIRSIEVTVEKQKVVAQGGDSDVIGFYREGEQLHIALLFLRGGTLTGSRNYSFSWEMDDHEGIASFLNEYYNQEVFIPSEIVLPIAIADPLPQEELLCELRGRRVSITVPQRGNKLELVRLAIKNAETAAAERKKAAESGEAILQTLKERLHLHKLPRRIECYDISNIQGQMAVGSKVAFVDGKADKAHYRRYRIKGVSQSDDFAMMREMFSRRFKPGTAPDDYPDLIIVDGGIGQLNVLTHVLGDLQITDVEAAGLAKSRVDREMGATEISRSDERVFLPNRKNPVVLRQNSAPLLLLARIRDEAHRFAVAYHKKLRGNKLLASQLEAIPGIGIKRRKELLRHFGSLKKISEATLEELRQVQGISATVAESLWKHLHENEKGDTNASPFVNFE</sequence>
<comment type="function">
    <text evidence="1">The UvrABC repair system catalyzes the recognition and processing of DNA lesions. UvrC both incises the 5' and 3' sides of the lesion. The N-terminal half is responsible for the 3' incision and the C-terminal half is responsible for the 5' incision.</text>
</comment>
<comment type="subunit">
    <text evidence="1">Interacts with UvrB in an incision complex.</text>
</comment>
<comment type="subcellular location">
    <subcellularLocation>
        <location evidence="1">Cytoplasm</location>
    </subcellularLocation>
</comment>
<comment type="similarity">
    <text evidence="1">Belongs to the UvrC family.</text>
</comment>
<feature type="chain" id="PRO_1000200590" description="UvrABC system protein C">
    <location>
        <begin position="1"/>
        <end position="622"/>
    </location>
</feature>
<feature type="domain" description="GIY-YIG" evidence="1">
    <location>
        <begin position="12"/>
        <end position="91"/>
    </location>
</feature>
<feature type="domain" description="UVR" evidence="1">
    <location>
        <begin position="201"/>
        <end position="236"/>
    </location>
</feature>
<gene>
    <name evidence="1" type="primary">uvrC</name>
    <name type="ordered locus">Geob_1305</name>
</gene>
<protein>
    <recommendedName>
        <fullName evidence="1">UvrABC system protein C</fullName>
        <shortName evidence="1">Protein UvrC</shortName>
    </recommendedName>
    <alternativeName>
        <fullName evidence="1">Excinuclease ABC subunit C</fullName>
    </alternativeName>
</protein>